<dbReference type="EC" id="5.3.1.1" evidence="1"/>
<dbReference type="EMBL" id="AE000782">
    <property type="protein sequence ID" value="AAB89944.1"/>
    <property type="molecule type" value="Genomic_DNA"/>
</dbReference>
<dbReference type="PIR" id="G69412">
    <property type="entry name" value="G69412"/>
</dbReference>
<dbReference type="SMR" id="O28965"/>
<dbReference type="STRING" id="224325.AF_1304"/>
<dbReference type="PaxDb" id="224325-AF_1304"/>
<dbReference type="EnsemblBacteria" id="AAB89944">
    <property type="protein sequence ID" value="AAB89944"/>
    <property type="gene ID" value="AF_1304"/>
</dbReference>
<dbReference type="KEGG" id="afu:AF_1304"/>
<dbReference type="eggNOG" id="arCOG01087">
    <property type="taxonomic scope" value="Archaea"/>
</dbReference>
<dbReference type="HOGENOM" id="CLU_104921_0_0_2"/>
<dbReference type="PhylomeDB" id="O28965"/>
<dbReference type="UniPathway" id="UPA00109">
    <property type="reaction ID" value="UER00189"/>
</dbReference>
<dbReference type="UniPathway" id="UPA00138"/>
<dbReference type="Proteomes" id="UP000002199">
    <property type="component" value="Chromosome"/>
</dbReference>
<dbReference type="GO" id="GO:0005829">
    <property type="term" value="C:cytosol"/>
    <property type="evidence" value="ECO:0007669"/>
    <property type="project" value="TreeGrafter"/>
</dbReference>
<dbReference type="GO" id="GO:0004807">
    <property type="term" value="F:triose-phosphate isomerase activity"/>
    <property type="evidence" value="ECO:0007669"/>
    <property type="project" value="UniProtKB-UniRule"/>
</dbReference>
<dbReference type="GO" id="GO:0006094">
    <property type="term" value="P:gluconeogenesis"/>
    <property type="evidence" value="ECO:0007669"/>
    <property type="project" value="UniProtKB-UniRule"/>
</dbReference>
<dbReference type="GO" id="GO:0046166">
    <property type="term" value="P:glyceraldehyde-3-phosphate biosynthetic process"/>
    <property type="evidence" value="ECO:0007669"/>
    <property type="project" value="TreeGrafter"/>
</dbReference>
<dbReference type="GO" id="GO:0019563">
    <property type="term" value="P:glycerol catabolic process"/>
    <property type="evidence" value="ECO:0007669"/>
    <property type="project" value="TreeGrafter"/>
</dbReference>
<dbReference type="GO" id="GO:0006096">
    <property type="term" value="P:glycolytic process"/>
    <property type="evidence" value="ECO:0007669"/>
    <property type="project" value="UniProtKB-UniRule"/>
</dbReference>
<dbReference type="CDD" id="cd00311">
    <property type="entry name" value="TIM"/>
    <property type="match status" value="1"/>
</dbReference>
<dbReference type="FunFam" id="3.20.20.70:FF:000223">
    <property type="entry name" value="Triosephosphate isomerase"/>
    <property type="match status" value="1"/>
</dbReference>
<dbReference type="Gene3D" id="3.20.20.70">
    <property type="entry name" value="Aldolase class I"/>
    <property type="match status" value="1"/>
</dbReference>
<dbReference type="HAMAP" id="MF_00147_A">
    <property type="entry name" value="TIM_A"/>
    <property type="match status" value="1"/>
</dbReference>
<dbReference type="InterPro" id="IPR013785">
    <property type="entry name" value="Aldolase_TIM"/>
</dbReference>
<dbReference type="InterPro" id="IPR035990">
    <property type="entry name" value="TIM_sf"/>
</dbReference>
<dbReference type="InterPro" id="IPR000652">
    <property type="entry name" value="Triosephosphate_isomerase"/>
</dbReference>
<dbReference type="InterPro" id="IPR022891">
    <property type="entry name" value="Triosephosphate_isomerase_arc"/>
</dbReference>
<dbReference type="InterPro" id="IPR020861">
    <property type="entry name" value="Triosephosphate_isomerase_AS"/>
</dbReference>
<dbReference type="NCBIfam" id="NF003302">
    <property type="entry name" value="PRK04302.1"/>
    <property type="match status" value="1"/>
</dbReference>
<dbReference type="NCBIfam" id="TIGR00419">
    <property type="entry name" value="tim"/>
    <property type="match status" value="1"/>
</dbReference>
<dbReference type="PANTHER" id="PTHR21139">
    <property type="entry name" value="TRIOSEPHOSPHATE ISOMERASE"/>
    <property type="match status" value="1"/>
</dbReference>
<dbReference type="PANTHER" id="PTHR21139:SF42">
    <property type="entry name" value="TRIOSEPHOSPHATE ISOMERASE"/>
    <property type="match status" value="1"/>
</dbReference>
<dbReference type="Pfam" id="PF00121">
    <property type="entry name" value="TIM"/>
    <property type="match status" value="1"/>
</dbReference>
<dbReference type="SUPFAM" id="SSF51351">
    <property type="entry name" value="Triosephosphate isomerase (TIM)"/>
    <property type="match status" value="1"/>
</dbReference>
<dbReference type="PROSITE" id="PS00171">
    <property type="entry name" value="TIM_1"/>
    <property type="match status" value="1"/>
</dbReference>
<dbReference type="PROSITE" id="PS51440">
    <property type="entry name" value="TIM_2"/>
    <property type="match status" value="1"/>
</dbReference>
<reference key="1">
    <citation type="journal article" date="1997" name="Nature">
        <title>The complete genome sequence of the hyperthermophilic, sulphate-reducing archaeon Archaeoglobus fulgidus.</title>
        <authorList>
            <person name="Klenk H.-P."/>
            <person name="Clayton R.A."/>
            <person name="Tomb J.-F."/>
            <person name="White O."/>
            <person name="Nelson K.E."/>
            <person name="Ketchum K.A."/>
            <person name="Dodson R.J."/>
            <person name="Gwinn M.L."/>
            <person name="Hickey E.K."/>
            <person name="Peterson J.D."/>
            <person name="Richardson D.L."/>
            <person name="Kerlavage A.R."/>
            <person name="Graham D.E."/>
            <person name="Kyrpides N.C."/>
            <person name="Fleischmann R.D."/>
            <person name="Quackenbush J."/>
            <person name="Lee N.H."/>
            <person name="Sutton G.G."/>
            <person name="Gill S.R."/>
            <person name="Kirkness E.F."/>
            <person name="Dougherty B.A."/>
            <person name="McKenney K."/>
            <person name="Adams M.D."/>
            <person name="Loftus B.J."/>
            <person name="Peterson S.N."/>
            <person name="Reich C.I."/>
            <person name="McNeil L.K."/>
            <person name="Badger J.H."/>
            <person name="Glodek A."/>
            <person name="Zhou L."/>
            <person name="Overbeek R."/>
            <person name="Gocayne J.D."/>
            <person name="Weidman J.F."/>
            <person name="McDonald L.A."/>
            <person name="Utterback T.R."/>
            <person name="Cotton M.D."/>
            <person name="Spriggs T."/>
            <person name="Artiach P."/>
            <person name="Kaine B.P."/>
            <person name="Sykes S.M."/>
            <person name="Sadow P.W."/>
            <person name="D'Andrea K.P."/>
            <person name="Bowman C."/>
            <person name="Fujii C."/>
            <person name="Garland S.A."/>
            <person name="Mason T.M."/>
            <person name="Olsen G.J."/>
            <person name="Fraser C.M."/>
            <person name="Smith H.O."/>
            <person name="Woese C.R."/>
            <person name="Venter J.C."/>
        </authorList>
    </citation>
    <scope>NUCLEOTIDE SEQUENCE [LARGE SCALE GENOMIC DNA]</scope>
    <source>
        <strain>ATCC 49558 / DSM 4304 / JCM 9628 / NBRC 100126 / VC-16</strain>
    </source>
</reference>
<proteinExistence type="inferred from homology"/>
<keyword id="KW-0963">Cytoplasm</keyword>
<keyword id="KW-0312">Gluconeogenesis</keyword>
<keyword id="KW-0324">Glycolysis</keyword>
<keyword id="KW-0413">Isomerase</keyword>
<keyword id="KW-1185">Reference proteome</keyword>
<feature type="chain" id="PRO_0000090328" description="Triosephosphate isomerase">
    <location>
        <begin position="1"/>
        <end position="223"/>
    </location>
</feature>
<feature type="active site" description="Electrophile" evidence="1">
    <location>
        <position position="94"/>
    </location>
</feature>
<feature type="active site" description="Proton acceptor" evidence="1">
    <location>
        <position position="142"/>
    </location>
</feature>
<feature type="binding site" evidence="1">
    <location>
        <begin position="10"/>
        <end position="12"/>
    </location>
    <ligand>
        <name>substrate</name>
    </ligand>
</feature>
<feature type="binding site" evidence="1">
    <location>
        <position position="147"/>
    </location>
    <ligand>
        <name>substrate</name>
    </ligand>
</feature>
<feature type="binding site" evidence="1">
    <location>
        <position position="182"/>
    </location>
    <ligand>
        <name>substrate</name>
    </ligand>
</feature>
<feature type="binding site" evidence="1">
    <location>
        <begin position="203"/>
        <end position="204"/>
    </location>
    <ligand>
        <name>substrate</name>
    </ligand>
</feature>
<gene>
    <name evidence="1" type="primary">tpiA</name>
    <name type="ordered locus">AF_1304</name>
</gene>
<protein>
    <recommendedName>
        <fullName evidence="1">Triosephosphate isomerase</fullName>
        <shortName evidence="1">TIM</shortName>
        <shortName evidence="1">TPI</shortName>
        <ecNumber evidence="1">5.3.1.1</ecNumber>
    </recommendedName>
    <alternativeName>
        <fullName evidence="1">Triose-phosphate isomerase</fullName>
    </alternativeName>
</protein>
<evidence type="ECO:0000255" key="1">
    <source>
        <dbReference type="HAMAP-Rule" id="MF_00147"/>
    </source>
</evidence>
<comment type="function">
    <text evidence="1">Involved in the gluconeogenesis. Catalyzes stereospecifically the conversion of dihydroxyacetone phosphate (DHAP) to D-glyceraldehyde-3-phosphate (G3P).</text>
</comment>
<comment type="catalytic activity">
    <reaction evidence="1">
        <text>D-glyceraldehyde 3-phosphate = dihydroxyacetone phosphate</text>
        <dbReference type="Rhea" id="RHEA:18585"/>
        <dbReference type="ChEBI" id="CHEBI:57642"/>
        <dbReference type="ChEBI" id="CHEBI:59776"/>
        <dbReference type="EC" id="5.3.1.1"/>
    </reaction>
</comment>
<comment type="pathway">
    <text evidence="1">Carbohydrate biosynthesis; gluconeogenesis.</text>
</comment>
<comment type="pathway">
    <text evidence="1">Carbohydrate degradation; glycolysis; D-glyceraldehyde 3-phosphate from glycerone phosphate: step 1/1.</text>
</comment>
<comment type="subunit">
    <text evidence="1">Homotetramer; dimer of dimers.</text>
</comment>
<comment type="subcellular location">
    <subcellularLocation>
        <location evidence="1">Cytoplasm</location>
    </subcellularLocation>
</comment>
<comment type="similarity">
    <text evidence="1">Belongs to the triosephosphate isomerase family.</text>
</comment>
<name>TPIS_ARCFU</name>
<accession>O28965</accession>
<organism>
    <name type="scientific">Archaeoglobus fulgidus (strain ATCC 49558 / DSM 4304 / JCM 9628 / NBRC 100126 / VC-16)</name>
    <dbReference type="NCBI Taxonomy" id="224325"/>
    <lineage>
        <taxon>Archaea</taxon>
        <taxon>Methanobacteriati</taxon>
        <taxon>Methanobacteriota</taxon>
        <taxon>Archaeoglobi</taxon>
        <taxon>Archaeoglobales</taxon>
        <taxon>Archaeoglobaceae</taxon>
        <taxon>Archaeoglobus</taxon>
    </lineage>
</organism>
<sequence length="223" mass="23771">MRKMGVVIINFKAYKEGFGKRALELAKIAENVASRCDEYVGIAVSFLDLPVIAREVSIDVYAQHVDAVGFGSHTGRINADMIAEYGAKGSLVNHSERRLKLADIEFNVSRLRELGLTSVVCTNNVPTTAAAAALNPDFVAVEPPELIGSGIPVSKAEPEVVENSVKAAKEVNKSVRVLCGAGITTHEDYVKALELGAEGVLLASGVVKAEDQKRALEELVGLL</sequence>